<reference key="1">
    <citation type="journal article" date="2000" name="Nature">
        <title>Sequence and analysis of chromosome 3 of the plant Arabidopsis thaliana.</title>
        <authorList>
            <person name="Salanoubat M."/>
            <person name="Lemcke K."/>
            <person name="Rieger M."/>
            <person name="Ansorge W."/>
            <person name="Unseld M."/>
            <person name="Fartmann B."/>
            <person name="Valle G."/>
            <person name="Bloecker H."/>
            <person name="Perez-Alonso M."/>
            <person name="Obermaier B."/>
            <person name="Delseny M."/>
            <person name="Boutry M."/>
            <person name="Grivell L.A."/>
            <person name="Mache R."/>
            <person name="Puigdomenech P."/>
            <person name="De Simone V."/>
            <person name="Choisne N."/>
            <person name="Artiguenave F."/>
            <person name="Robert C."/>
            <person name="Brottier P."/>
            <person name="Wincker P."/>
            <person name="Cattolico L."/>
            <person name="Weissenbach J."/>
            <person name="Saurin W."/>
            <person name="Quetier F."/>
            <person name="Schaefer M."/>
            <person name="Mueller-Auer S."/>
            <person name="Gabel C."/>
            <person name="Fuchs M."/>
            <person name="Benes V."/>
            <person name="Wurmbach E."/>
            <person name="Drzonek H."/>
            <person name="Erfle H."/>
            <person name="Jordan N."/>
            <person name="Bangert S."/>
            <person name="Wiedelmann R."/>
            <person name="Kranz H."/>
            <person name="Voss H."/>
            <person name="Holland R."/>
            <person name="Brandt P."/>
            <person name="Nyakatura G."/>
            <person name="Vezzi A."/>
            <person name="D'Angelo M."/>
            <person name="Pallavicini A."/>
            <person name="Toppo S."/>
            <person name="Simionati B."/>
            <person name="Conrad A."/>
            <person name="Hornischer K."/>
            <person name="Kauer G."/>
            <person name="Loehnert T.-H."/>
            <person name="Nordsiek G."/>
            <person name="Reichelt J."/>
            <person name="Scharfe M."/>
            <person name="Schoen O."/>
            <person name="Bargues M."/>
            <person name="Terol J."/>
            <person name="Climent J."/>
            <person name="Navarro P."/>
            <person name="Collado C."/>
            <person name="Perez-Perez A."/>
            <person name="Ottenwaelder B."/>
            <person name="Duchemin D."/>
            <person name="Cooke R."/>
            <person name="Laudie M."/>
            <person name="Berger-Llauro C."/>
            <person name="Purnelle B."/>
            <person name="Masuy D."/>
            <person name="de Haan M."/>
            <person name="Maarse A.C."/>
            <person name="Alcaraz J.-P."/>
            <person name="Cottet A."/>
            <person name="Casacuberta E."/>
            <person name="Monfort A."/>
            <person name="Argiriou A."/>
            <person name="Flores M."/>
            <person name="Liguori R."/>
            <person name="Vitale D."/>
            <person name="Mannhaupt G."/>
            <person name="Haase D."/>
            <person name="Schoof H."/>
            <person name="Rudd S."/>
            <person name="Zaccaria P."/>
            <person name="Mewes H.-W."/>
            <person name="Mayer K.F.X."/>
            <person name="Kaul S."/>
            <person name="Town C.D."/>
            <person name="Koo H.L."/>
            <person name="Tallon L.J."/>
            <person name="Jenkins J."/>
            <person name="Rooney T."/>
            <person name="Rizzo M."/>
            <person name="Walts A."/>
            <person name="Utterback T."/>
            <person name="Fujii C.Y."/>
            <person name="Shea T.P."/>
            <person name="Creasy T.H."/>
            <person name="Haas B."/>
            <person name="Maiti R."/>
            <person name="Wu D."/>
            <person name="Peterson J."/>
            <person name="Van Aken S."/>
            <person name="Pai G."/>
            <person name="Militscher J."/>
            <person name="Sellers P."/>
            <person name="Gill J.E."/>
            <person name="Feldblyum T.V."/>
            <person name="Preuss D."/>
            <person name="Lin X."/>
            <person name="Nierman W.C."/>
            <person name="Salzberg S.L."/>
            <person name="White O."/>
            <person name="Venter J.C."/>
            <person name="Fraser C.M."/>
            <person name="Kaneko T."/>
            <person name="Nakamura Y."/>
            <person name="Sato S."/>
            <person name="Kato T."/>
            <person name="Asamizu E."/>
            <person name="Sasamoto S."/>
            <person name="Kimura T."/>
            <person name="Idesawa K."/>
            <person name="Kawashima K."/>
            <person name="Kishida Y."/>
            <person name="Kiyokawa C."/>
            <person name="Kohara M."/>
            <person name="Matsumoto M."/>
            <person name="Matsuno A."/>
            <person name="Muraki A."/>
            <person name="Nakayama S."/>
            <person name="Nakazaki N."/>
            <person name="Shinpo S."/>
            <person name="Takeuchi C."/>
            <person name="Wada T."/>
            <person name="Watanabe A."/>
            <person name="Yamada M."/>
            <person name="Yasuda M."/>
            <person name="Tabata S."/>
        </authorList>
    </citation>
    <scope>NUCLEOTIDE SEQUENCE [LARGE SCALE GENOMIC DNA]</scope>
    <source>
        <strain>cv. Columbia</strain>
    </source>
</reference>
<reference key="2">
    <citation type="journal article" date="2017" name="Plant J.">
        <title>Araport11: a complete reannotation of the Arabidopsis thaliana reference genome.</title>
        <authorList>
            <person name="Cheng C.Y."/>
            <person name="Krishnakumar V."/>
            <person name="Chan A.P."/>
            <person name="Thibaud-Nissen F."/>
            <person name="Schobel S."/>
            <person name="Town C.D."/>
        </authorList>
    </citation>
    <scope>GENOME REANNOTATION</scope>
    <source>
        <strain>cv. Columbia</strain>
    </source>
</reference>
<reference key="3">
    <citation type="journal article" date="2002" name="Science">
        <title>Functional annotation of a full-length Arabidopsis cDNA collection.</title>
        <authorList>
            <person name="Seki M."/>
            <person name="Narusaka M."/>
            <person name="Kamiya A."/>
            <person name="Ishida J."/>
            <person name="Satou M."/>
            <person name="Sakurai T."/>
            <person name="Nakajima M."/>
            <person name="Enju A."/>
            <person name="Akiyama K."/>
            <person name="Oono Y."/>
            <person name="Muramatsu M."/>
            <person name="Hayashizaki Y."/>
            <person name="Kawai J."/>
            <person name="Carninci P."/>
            <person name="Itoh M."/>
            <person name="Ishii Y."/>
            <person name="Arakawa T."/>
            <person name="Shibata K."/>
            <person name="Shinagawa A."/>
            <person name="Shinozaki K."/>
        </authorList>
    </citation>
    <scope>NUCLEOTIDE SEQUENCE [LARGE SCALE MRNA] (ISOFORM 1)</scope>
    <source>
        <strain>cv. Columbia</strain>
    </source>
</reference>
<reference key="4">
    <citation type="journal article" date="2003" name="Science">
        <title>Empirical analysis of transcriptional activity in the Arabidopsis genome.</title>
        <authorList>
            <person name="Yamada K."/>
            <person name="Lim J."/>
            <person name="Dale J.M."/>
            <person name="Chen H."/>
            <person name="Shinn P."/>
            <person name="Palm C.J."/>
            <person name="Southwick A.M."/>
            <person name="Wu H.C."/>
            <person name="Kim C.J."/>
            <person name="Nguyen M."/>
            <person name="Pham P.K."/>
            <person name="Cheuk R.F."/>
            <person name="Karlin-Newmann G."/>
            <person name="Liu S.X."/>
            <person name="Lam B."/>
            <person name="Sakano H."/>
            <person name="Wu T."/>
            <person name="Yu G."/>
            <person name="Miranda M."/>
            <person name="Quach H.L."/>
            <person name="Tripp M."/>
            <person name="Chang C.H."/>
            <person name="Lee J.M."/>
            <person name="Toriumi M.J."/>
            <person name="Chan M.M."/>
            <person name="Tang C.C."/>
            <person name="Onodera C.S."/>
            <person name="Deng J.M."/>
            <person name="Akiyama K."/>
            <person name="Ansari Y."/>
            <person name="Arakawa T."/>
            <person name="Banh J."/>
            <person name="Banno F."/>
            <person name="Bowser L."/>
            <person name="Brooks S.Y."/>
            <person name="Carninci P."/>
            <person name="Chao Q."/>
            <person name="Choy N."/>
            <person name="Enju A."/>
            <person name="Goldsmith A.D."/>
            <person name="Gurjal M."/>
            <person name="Hansen N.F."/>
            <person name="Hayashizaki Y."/>
            <person name="Johnson-Hopson C."/>
            <person name="Hsuan V.W."/>
            <person name="Iida K."/>
            <person name="Karnes M."/>
            <person name="Khan S."/>
            <person name="Koesema E."/>
            <person name="Ishida J."/>
            <person name="Jiang P.X."/>
            <person name="Jones T."/>
            <person name="Kawai J."/>
            <person name="Kamiya A."/>
            <person name="Meyers C."/>
            <person name="Nakajima M."/>
            <person name="Narusaka M."/>
            <person name="Seki M."/>
            <person name="Sakurai T."/>
            <person name="Satou M."/>
            <person name="Tamse R."/>
            <person name="Vaysberg M."/>
            <person name="Wallender E.K."/>
            <person name="Wong C."/>
            <person name="Yamamura Y."/>
            <person name="Yuan S."/>
            <person name="Shinozaki K."/>
            <person name="Davis R.W."/>
            <person name="Theologis A."/>
            <person name="Ecker J.R."/>
        </authorList>
    </citation>
    <scope>NUCLEOTIDE SEQUENCE [LARGE SCALE MRNA] (ISOFORM 1)</scope>
    <source>
        <strain>cv. Columbia</strain>
    </source>
</reference>
<reference key="5">
    <citation type="submission" date="2002-03" db="EMBL/GenBank/DDBJ databases">
        <title>Full-length cDNA from Arabidopsis thaliana.</title>
        <authorList>
            <person name="Brover V.V."/>
            <person name="Troukhan M.E."/>
            <person name="Alexandrov N.A."/>
            <person name="Lu Y.-P."/>
            <person name="Flavell R.B."/>
            <person name="Feldmann K.A."/>
        </authorList>
    </citation>
    <scope>NUCLEOTIDE SEQUENCE [LARGE SCALE MRNA] (ISOFORM 1)</scope>
</reference>
<reference key="6">
    <citation type="journal article" date="2005" name="Plant J.">
        <title>Identification of a novel cis-acting element conferring sulfur deficiency response in Arabidopsis roots.</title>
        <authorList>
            <person name="Maruyama-Nakashita A."/>
            <person name="Nakamura Y."/>
            <person name="Watanabe-Takahashi A."/>
            <person name="Inoue E."/>
            <person name="Yamaya T."/>
            <person name="Takahashi H."/>
        </authorList>
    </citation>
    <scope>INDUCTION BY SULFUR DEFICIENCY</scope>
</reference>
<reference key="7">
    <citation type="journal article" date="2014" name="Front. Plant Sci.">
        <title>The family of LSU-like proteins.</title>
        <authorList>
            <person name="Sirko A."/>
            <person name="Wawrzynska A."/>
            <person name="Rodriguez M.C."/>
            <person name="Sektas P."/>
        </authorList>
    </citation>
    <scope>INDUCTION BY STRESSFUL ENVIRONMENTAL CONDITIONS</scope>
    <scope>REVIEW</scope>
    <scope>GENE FAMILY</scope>
    <scope>NOMENCLATURE</scope>
</reference>
<gene>
    <name evidence="3" type="primary">LSU1</name>
    <name evidence="4" type="ordered locus">At3g49580</name>
    <name evidence="5" type="ORF">T9C5.170</name>
</gene>
<organism>
    <name type="scientific">Arabidopsis thaliana</name>
    <name type="common">Mouse-ear cress</name>
    <dbReference type="NCBI Taxonomy" id="3702"/>
    <lineage>
        <taxon>Eukaryota</taxon>
        <taxon>Viridiplantae</taxon>
        <taxon>Streptophyta</taxon>
        <taxon>Embryophyta</taxon>
        <taxon>Tracheophyta</taxon>
        <taxon>Spermatophyta</taxon>
        <taxon>Magnoliopsida</taxon>
        <taxon>eudicotyledons</taxon>
        <taxon>Gunneridae</taxon>
        <taxon>Pentapetalae</taxon>
        <taxon>rosids</taxon>
        <taxon>malvids</taxon>
        <taxon>Brassicales</taxon>
        <taxon>Brassicaceae</taxon>
        <taxon>Camelineae</taxon>
        <taxon>Arabidopsis</taxon>
    </lineage>
</organism>
<proteinExistence type="evidence at protein level"/>
<dbReference type="EMBL" id="AL132964">
    <property type="protein sequence ID" value="CAB62462.1"/>
    <property type="molecule type" value="Genomic_DNA"/>
</dbReference>
<dbReference type="EMBL" id="CP002686">
    <property type="protein sequence ID" value="AEE78559.1"/>
    <property type="molecule type" value="Genomic_DNA"/>
</dbReference>
<dbReference type="EMBL" id="CP002686">
    <property type="protein sequence ID" value="AEE78560.1"/>
    <property type="molecule type" value="Genomic_DNA"/>
</dbReference>
<dbReference type="EMBL" id="AK117604">
    <property type="protein sequence ID" value="BAC42260.1"/>
    <property type="molecule type" value="mRNA"/>
</dbReference>
<dbReference type="EMBL" id="BT005036">
    <property type="protein sequence ID" value="AAO50569.1"/>
    <property type="molecule type" value="mRNA"/>
</dbReference>
<dbReference type="EMBL" id="AY086614">
    <property type="protein sequence ID" value="AAM63673.1"/>
    <property type="molecule type" value="mRNA"/>
</dbReference>
<dbReference type="PIR" id="T46235">
    <property type="entry name" value="T46235"/>
</dbReference>
<dbReference type="RefSeq" id="NP_001190042.1">
    <molecule id="Q9SCK1-2"/>
    <property type="nucleotide sequence ID" value="NM_001203113.1"/>
</dbReference>
<dbReference type="RefSeq" id="NP_190527.1">
    <molecule id="Q9SCK1-1"/>
    <property type="nucleotide sequence ID" value="NM_114818.4"/>
</dbReference>
<dbReference type="SMR" id="Q9SCK1"/>
<dbReference type="FunCoup" id="Q9SCK1">
    <property type="interactions" value="48"/>
</dbReference>
<dbReference type="IntAct" id="Q9SCK1">
    <property type="interactions" value="81"/>
</dbReference>
<dbReference type="STRING" id="3702.Q9SCK1"/>
<dbReference type="PaxDb" id="3702-AT3G49580.1"/>
<dbReference type="EnsemblPlants" id="AT3G49580.1">
    <molecule id="Q9SCK1-1"/>
    <property type="protein sequence ID" value="AT3G49580.1"/>
    <property type="gene ID" value="AT3G49580"/>
</dbReference>
<dbReference type="EnsemblPlants" id="AT3G49580.2">
    <molecule id="Q9SCK1-2"/>
    <property type="protein sequence ID" value="AT3G49580.2"/>
    <property type="gene ID" value="AT3G49580"/>
</dbReference>
<dbReference type="GeneID" id="824120"/>
<dbReference type="Gramene" id="AT3G49580.1">
    <molecule id="Q9SCK1-1"/>
    <property type="protein sequence ID" value="AT3G49580.1"/>
    <property type="gene ID" value="AT3G49580"/>
</dbReference>
<dbReference type="Gramene" id="AT3G49580.2">
    <molecule id="Q9SCK1-2"/>
    <property type="protein sequence ID" value="AT3G49580.2"/>
    <property type="gene ID" value="AT3G49580"/>
</dbReference>
<dbReference type="KEGG" id="ath:AT3G49580"/>
<dbReference type="Araport" id="AT3G49580"/>
<dbReference type="TAIR" id="AT3G49580">
    <property type="gene designation" value="LSU1"/>
</dbReference>
<dbReference type="eggNOG" id="ENOG502SZ0Q">
    <property type="taxonomic scope" value="Eukaryota"/>
</dbReference>
<dbReference type="InParanoid" id="Q9SCK1"/>
<dbReference type="OMA" id="SACNICA"/>
<dbReference type="OrthoDB" id="1888446at2759"/>
<dbReference type="PhylomeDB" id="Q9SCK1"/>
<dbReference type="PRO" id="PR:Q9SCK1"/>
<dbReference type="Proteomes" id="UP000006548">
    <property type="component" value="Chromosome 3"/>
</dbReference>
<dbReference type="ExpressionAtlas" id="Q9SCK1">
    <property type="expression patterns" value="baseline and differential"/>
</dbReference>
<dbReference type="GO" id="GO:0098869">
    <property type="term" value="P:cellular oxidant detoxification"/>
    <property type="evidence" value="ECO:0007669"/>
    <property type="project" value="InterPro"/>
</dbReference>
<dbReference type="GO" id="GO:0010438">
    <property type="term" value="P:cellular response to sulfur starvation"/>
    <property type="evidence" value="ECO:0000270"/>
    <property type="project" value="UniProtKB"/>
</dbReference>
<dbReference type="GO" id="GO:0009651">
    <property type="term" value="P:response to salt stress"/>
    <property type="evidence" value="ECO:0000270"/>
    <property type="project" value="UniProtKB"/>
</dbReference>
<dbReference type="InterPro" id="IPR039282">
    <property type="entry name" value="LSU"/>
</dbReference>
<dbReference type="PANTHER" id="PTHR34283">
    <property type="entry name" value="PROTEIN RESPONSE TO LOW SULFUR 1"/>
    <property type="match status" value="1"/>
</dbReference>
<dbReference type="PANTHER" id="PTHR34283:SF1">
    <property type="entry name" value="PROTEIN RESPONSE TO LOW SULFUR 1"/>
    <property type="match status" value="1"/>
</dbReference>
<dbReference type="Pfam" id="PF24980">
    <property type="entry name" value="LSU"/>
    <property type="match status" value="1"/>
</dbReference>
<feature type="chain" id="PRO_0000437692" description="Protein RESPONSE TO LOW SULFUR 1">
    <location>
        <begin position="1"/>
        <end position="94"/>
    </location>
</feature>
<feature type="coiled-coil region" evidence="1">
    <location>
        <begin position="8"/>
        <end position="35"/>
    </location>
</feature>
<feature type="splice variant" id="VSP_058564" description="In isoform 2.">
    <location>
        <begin position="28"/>
        <end position="46"/>
    </location>
</feature>
<protein>
    <recommendedName>
        <fullName evidence="3">Protein RESPONSE TO LOW SULFUR 1</fullName>
    </recommendedName>
</protein>
<name>LSU1_ARATH</name>
<evidence type="ECO:0000255" key="1"/>
<evidence type="ECO:0000269" key="2">
    <source>
    </source>
</evidence>
<evidence type="ECO:0000303" key="3">
    <source>
    </source>
</evidence>
<evidence type="ECO:0000312" key="4">
    <source>
        <dbReference type="Araport" id="AT3G49580"/>
    </source>
</evidence>
<evidence type="ECO:0000312" key="5">
    <source>
        <dbReference type="EMBL" id="CAB62462.1"/>
    </source>
</evidence>
<sequence>MANRGGCVTVAAEEMDELRRRNIELSREVAEMKTEMIKLWQRTVVAEEAEEQLCSQLAELEVESLEQARDYHDRMLFLMDQISRLSSSSVVSSS</sequence>
<accession>Q9SCK1</accession>
<accession>F4IXZ4</accession>
<comment type="interaction">
    <interactant intactId="EBI-4424157">
        <id>Q9SCK1</id>
    </interactant>
    <interactant intactId="EBI-1392093">
        <id>Q5ICL9</id>
        <label>NPR4</label>
    </interactant>
    <organismsDiffer>false</organismsDiffer>
    <experiments>3</experiments>
</comment>
<comment type="interaction">
    <interactant intactId="EBI-4424157">
        <id>Q9SCK1</id>
    </interactant>
    <interactant intactId="EBI-2349513">
        <id>Q84MC7</id>
        <label>PYL9</label>
    </interactant>
    <organismsDiffer>false</organismsDiffer>
    <experiments>3</experiments>
</comment>
<comment type="alternative products">
    <event type="alternative splicing"/>
    <isoform>
        <id>Q9SCK1-1</id>
        <name>1</name>
        <sequence type="displayed"/>
    </isoform>
    <isoform>
        <id>Q9SCK1-2</id>
        <name>2</name>
        <sequence type="described" ref="VSP_058564"/>
    </isoform>
</comment>
<comment type="induction">
    <text evidence="2 3">By stressful environmental conditions such as salt stress, AgNO(3), and sulfur deficiency.</text>
</comment>
<keyword id="KW-0025">Alternative splicing</keyword>
<keyword id="KW-0175">Coiled coil</keyword>
<keyword id="KW-1185">Reference proteome</keyword>